<name>GLMM_STRA3</name>
<sequence>MGKYFGTDGVRGEANVELTPELAFKLGRFGGYVLSQHETDRPRVFVARDTRISGEMLESALIAGLLSVGIEVYKLGVLATPGVSYLVRTEKASAGVMISASHNPALDNGIKFFGSDGFKLDDDRELEIEALLDAKEDTLPRPSAQGLGTLVDYPEGLRKYEKFMESTGIDLEGMKVALDTANGAATASARNIFLDLNADISVIGDQPDGLNINDGVGSTHPEQLQSLVRENGSDIGLAFDGDSDRLIAVDENGEIVDGDKIMFIIGKYLSDKGQLAQNTIVTTVMSNLGFHKALDREGIHKAITAVGDRYVVEEMRKSGYNLGGEQSGHVIIMDYNTTGDGQLTAIQLTKVMKETGKKLSELASEVTIYPQKLVNIRVENNMKDKAMEVPAIAEIIAKMEEEMDGNGRILVRPSGTEPLLRVMAEAPTNEAVDYYVDTIADVVRTEIGLD</sequence>
<keyword id="KW-0413">Isomerase</keyword>
<keyword id="KW-0460">Magnesium</keyword>
<keyword id="KW-0479">Metal-binding</keyword>
<keyword id="KW-0597">Phosphoprotein</keyword>
<protein>
    <recommendedName>
        <fullName evidence="1">Phosphoglucosamine mutase</fullName>
        <ecNumber evidence="1">5.4.2.10</ecNumber>
    </recommendedName>
</protein>
<reference key="1">
    <citation type="journal article" date="2002" name="Mol. Microbiol.">
        <title>Genome sequence of Streptococcus agalactiae, a pathogen causing invasive neonatal disease.</title>
        <authorList>
            <person name="Glaser P."/>
            <person name="Rusniok C."/>
            <person name="Buchrieser C."/>
            <person name="Chevalier F."/>
            <person name="Frangeul L."/>
            <person name="Msadek T."/>
            <person name="Zouine M."/>
            <person name="Couve E."/>
            <person name="Lalioui L."/>
            <person name="Poyart C."/>
            <person name="Trieu-Cuot P."/>
            <person name="Kunst F."/>
        </authorList>
    </citation>
    <scope>NUCLEOTIDE SEQUENCE [LARGE SCALE GENOMIC DNA]</scope>
    <source>
        <strain>NEM316</strain>
    </source>
</reference>
<proteinExistence type="inferred from homology"/>
<accession>Q8E5S6</accession>
<gene>
    <name evidence="1" type="primary">glmM</name>
    <name type="ordered locus">gbs0904</name>
</gene>
<comment type="function">
    <text evidence="1">Catalyzes the conversion of glucosamine-6-phosphate to glucosamine-1-phosphate.</text>
</comment>
<comment type="catalytic activity">
    <reaction evidence="1">
        <text>alpha-D-glucosamine 1-phosphate = D-glucosamine 6-phosphate</text>
        <dbReference type="Rhea" id="RHEA:23424"/>
        <dbReference type="ChEBI" id="CHEBI:58516"/>
        <dbReference type="ChEBI" id="CHEBI:58725"/>
        <dbReference type="EC" id="5.4.2.10"/>
    </reaction>
</comment>
<comment type="cofactor">
    <cofactor evidence="1">
        <name>Mg(2+)</name>
        <dbReference type="ChEBI" id="CHEBI:18420"/>
    </cofactor>
    <text evidence="1">Binds 1 Mg(2+) ion per subunit.</text>
</comment>
<comment type="PTM">
    <text evidence="1">Activated by phosphorylation.</text>
</comment>
<comment type="similarity">
    <text evidence="1">Belongs to the phosphohexose mutase family.</text>
</comment>
<dbReference type="EC" id="5.4.2.10" evidence="1"/>
<dbReference type="EMBL" id="AL766847">
    <property type="protein sequence ID" value="CAD46548.1"/>
    <property type="molecule type" value="Genomic_DNA"/>
</dbReference>
<dbReference type="RefSeq" id="WP_000521427.1">
    <property type="nucleotide sequence ID" value="NC_004368.1"/>
</dbReference>
<dbReference type="SMR" id="Q8E5S6"/>
<dbReference type="KEGG" id="san:gbs0904"/>
<dbReference type="eggNOG" id="COG1109">
    <property type="taxonomic scope" value="Bacteria"/>
</dbReference>
<dbReference type="HOGENOM" id="CLU_016950_7_0_9"/>
<dbReference type="Proteomes" id="UP000000823">
    <property type="component" value="Chromosome"/>
</dbReference>
<dbReference type="GO" id="GO:0005829">
    <property type="term" value="C:cytosol"/>
    <property type="evidence" value="ECO:0007669"/>
    <property type="project" value="TreeGrafter"/>
</dbReference>
<dbReference type="GO" id="GO:0000287">
    <property type="term" value="F:magnesium ion binding"/>
    <property type="evidence" value="ECO:0007669"/>
    <property type="project" value="UniProtKB-UniRule"/>
</dbReference>
<dbReference type="GO" id="GO:0008966">
    <property type="term" value="F:phosphoglucosamine mutase activity"/>
    <property type="evidence" value="ECO:0007669"/>
    <property type="project" value="UniProtKB-UniRule"/>
</dbReference>
<dbReference type="GO" id="GO:0004615">
    <property type="term" value="F:phosphomannomutase activity"/>
    <property type="evidence" value="ECO:0007669"/>
    <property type="project" value="TreeGrafter"/>
</dbReference>
<dbReference type="GO" id="GO:0005975">
    <property type="term" value="P:carbohydrate metabolic process"/>
    <property type="evidence" value="ECO:0007669"/>
    <property type="project" value="InterPro"/>
</dbReference>
<dbReference type="GO" id="GO:0009252">
    <property type="term" value="P:peptidoglycan biosynthetic process"/>
    <property type="evidence" value="ECO:0007669"/>
    <property type="project" value="TreeGrafter"/>
</dbReference>
<dbReference type="GO" id="GO:0006048">
    <property type="term" value="P:UDP-N-acetylglucosamine biosynthetic process"/>
    <property type="evidence" value="ECO:0007669"/>
    <property type="project" value="TreeGrafter"/>
</dbReference>
<dbReference type="CDD" id="cd05802">
    <property type="entry name" value="GlmM"/>
    <property type="match status" value="1"/>
</dbReference>
<dbReference type="FunFam" id="3.30.310.50:FF:000001">
    <property type="entry name" value="Phosphoglucosamine mutase"/>
    <property type="match status" value="1"/>
</dbReference>
<dbReference type="FunFam" id="3.40.120.10:FF:000001">
    <property type="entry name" value="Phosphoglucosamine mutase"/>
    <property type="match status" value="1"/>
</dbReference>
<dbReference type="FunFam" id="3.40.120.10:FF:000002">
    <property type="entry name" value="Phosphoglucosamine mutase"/>
    <property type="match status" value="1"/>
</dbReference>
<dbReference type="Gene3D" id="3.40.120.10">
    <property type="entry name" value="Alpha-D-Glucose-1,6-Bisphosphate, subunit A, domain 3"/>
    <property type="match status" value="3"/>
</dbReference>
<dbReference type="Gene3D" id="3.30.310.50">
    <property type="entry name" value="Alpha-D-phosphohexomutase, C-terminal domain"/>
    <property type="match status" value="1"/>
</dbReference>
<dbReference type="HAMAP" id="MF_01554_B">
    <property type="entry name" value="GlmM_B"/>
    <property type="match status" value="1"/>
</dbReference>
<dbReference type="InterPro" id="IPR005844">
    <property type="entry name" value="A-D-PHexomutase_a/b/a-I"/>
</dbReference>
<dbReference type="InterPro" id="IPR016055">
    <property type="entry name" value="A-D-PHexomutase_a/b/a-I/II/III"/>
</dbReference>
<dbReference type="InterPro" id="IPR005845">
    <property type="entry name" value="A-D-PHexomutase_a/b/a-II"/>
</dbReference>
<dbReference type="InterPro" id="IPR005846">
    <property type="entry name" value="A-D-PHexomutase_a/b/a-III"/>
</dbReference>
<dbReference type="InterPro" id="IPR005843">
    <property type="entry name" value="A-D-PHexomutase_C"/>
</dbReference>
<dbReference type="InterPro" id="IPR036900">
    <property type="entry name" value="A-D-PHexomutase_C_sf"/>
</dbReference>
<dbReference type="InterPro" id="IPR016066">
    <property type="entry name" value="A-D-PHexomutase_CS"/>
</dbReference>
<dbReference type="InterPro" id="IPR005841">
    <property type="entry name" value="Alpha-D-phosphohexomutase_SF"/>
</dbReference>
<dbReference type="InterPro" id="IPR006352">
    <property type="entry name" value="GlmM_bact"/>
</dbReference>
<dbReference type="InterPro" id="IPR050060">
    <property type="entry name" value="Phosphoglucosamine_mutase"/>
</dbReference>
<dbReference type="NCBIfam" id="TIGR01455">
    <property type="entry name" value="glmM"/>
    <property type="match status" value="1"/>
</dbReference>
<dbReference type="NCBIfam" id="NF008139">
    <property type="entry name" value="PRK10887.1"/>
    <property type="match status" value="1"/>
</dbReference>
<dbReference type="PANTHER" id="PTHR42946:SF1">
    <property type="entry name" value="PHOSPHOGLUCOMUTASE (ALPHA-D-GLUCOSE-1,6-BISPHOSPHATE-DEPENDENT)"/>
    <property type="match status" value="1"/>
</dbReference>
<dbReference type="PANTHER" id="PTHR42946">
    <property type="entry name" value="PHOSPHOHEXOSE MUTASE"/>
    <property type="match status" value="1"/>
</dbReference>
<dbReference type="Pfam" id="PF02878">
    <property type="entry name" value="PGM_PMM_I"/>
    <property type="match status" value="1"/>
</dbReference>
<dbReference type="Pfam" id="PF02879">
    <property type="entry name" value="PGM_PMM_II"/>
    <property type="match status" value="1"/>
</dbReference>
<dbReference type="Pfam" id="PF02880">
    <property type="entry name" value="PGM_PMM_III"/>
    <property type="match status" value="1"/>
</dbReference>
<dbReference type="Pfam" id="PF00408">
    <property type="entry name" value="PGM_PMM_IV"/>
    <property type="match status" value="1"/>
</dbReference>
<dbReference type="PRINTS" id="PR00509">
    <property type="entry name" value="PGMPMM"/>
</dbReference>
<dbReference type="SUPFAM" id="SSF55957">
    <property type="entry name" value="Phosphoglucomutase, C-terminal domain"/>
    <property type="match status" value="1"/>
</dbReference>
<dbReference type="SUPFAM" id="SSF53738">
    <property type="entry name" value="Phosphoglucomutase, first 3 domains"/>
    <property type="match status" value="3"/>
</dbReference>
<dbReference type="PROSITE" id="PS00710">
    <property type="entry name" value="PGM_PMM"/>
    <property type="match status" value="1"/>
</dbReference>
<evidence type="ECO:0000255" key="1">
    <source>
        <dbReference type="HAMAP-Rule" id="MF_01554"/>
    </source>
</evidence>
<feature type="chain" id="PRO_0000147970" description="Phosphoglucosamine mutase">
    <location>
        <begin position="1"/>
        <end position="450"/>
    </location>
</feature>
<feature type="active site" description="Phosphoserine intermediate" evidence="1">
    <location>
        <position position="101"/>
    </location>
</feature>
<feature type="binding site" description="via phosphate group" evidence="1">
    <location>
        <position position="101"/>
    </location>
    <ligand>
        <name>Mg(2+)</name>
        <dbReference type="ChEBI" id="CHEBI:18420"/>
    </ligand>
</feature>
<feature type="binding site" evidence="1">
    <location>
        <position position="240"/>
    </location>
    <ligand>
        <name>Mg(2+)</name>
        <dbReference type="ChEBI" id="CHEBI:18420"/>
    </ligand>
</feature>
<feature type="binding site" evidence="1">
    <location>
        <position position="242"/>
    </location>
    <ligand>
        <name>Mg(2+)</name>
        <dbReference type="ChEBI" id="CHEBI:18420"/>
    </ligand>
</feature>
<feature type="binding site" evidence="1">
    <location>
        <position position="244"/>
    </location>
    <ligand>
        <name>Mg(2+)</name>
        <dbReference type="ChEBI" id="CHEBI:18420"/>
    </ligand>
</feature>
<feature type="modified residue" description="Phosphoserine" evidence="1">
    <location>
        <position position="101"/>
    </location>
</feature>
<organism>
    <name type="scientific">Streptococcus agalactiae serotype III (strain NEM316)</name>
    <dbReference type="NCBI Taxonomy" id="211110"/>
    <lineage>
        <taxon>Bacteria</taxon>
        <taxon>Bacillati</taxon>
        <taxon>Bacillota</taxon>
        <taxon>Bacilli</taxon>
        <taxon>Lactobacillales</taxon>
        <taxon>Streptococcaceae</taxon>
        <taxon>Streptococcus</taxon>
    </lineage>
</organism>